<reference key="1">
    <citation type="submission" date="2007-10" db="EMBL/GenBank/DDBJ databases">
        <title>Brucella canis ATCC 23365 whole genome shotgun sequencing project.</title>
        <authorList>
            <person name="Setubal J.C."/>
            <person name="Bowns C."/>
            <person name="Boyle S."/>
            <person name="Crasta O.R."/>
            <person name="Czar M.J."/>
            <person name="Dharmanolla C."/>
            <person name="Gillespie J.J."/>
            <person name="Kenyon R.W."/>
            <person name="Lu J."/>
            <person name="Mane S."/>
            <person name="Mohapatra S."/>
            <person name="Nagrani S."/>
            <person name="Purkayastha A."/>
            <person name="Rajasimha H.K."/>
            <person name="Shallom J.M."/>
            <person name="Shallom S."/>
            <person name="Shukla M."/>
            <person name="Snyder E.E."/>
            <person name="Sobral B.W."/>
            <person name="Wattam A.R."/>
            <person name="Will R."/>
            <person name="Williams K."/>
            <person name="Yoo H."/>
            <person name="Bruce D."/>
            <person name="Detter C."/>
            <person name="Munk C."/>
            <person name="Brettin T.S."/>
        </authorList>
    </citation>
    <scope>NUCLEOTIDE SEQUENCE [LARGE SCALE GENOMIC DNA]</scope>
    <source>
        <strain>ATCC 23365 / NCTC 10854 / RM-666</strain>
    </source>
</reference>
<sequence length="140" mass="15278">MAIERTFSMIKPDATRRNLTGAIIAKLEEAGLRVVASKRVWMSRREAEGFYAVHKDRPFFGELVEFMSSGPTVVQVLEGENAIAKNREVMGATNPANADEGTIRKTFALSIGENSVHGSDAPETAAEEIAYWFSGTEIVG</sequence>
<name>NDK_BRUC2</name>
<protein>
    <recommendedName>
        <fullName evidence="1">Nucleoside diphosphate kinase</fullName>
        <shortName evidence="1">NDK</shortName>
        <shortName evidence="1">NDP kinase</shortName>
        <ecNumber evidence="1">2.7.4.6</ecNumber>
    </recommendedName>
    <alternativeName>
        <fullName evidence="1">Nucleoside-2-P kinase</fullName>
    </alternativeName>
</protein>
<comment type="function">
    <text evidence="1">Major role in the synthesis of nucleoside triphosphates other than ATP. The ATP gamma phosphate is transferred to the NDP beta phosphate via a ping-pong mechanism, using a phosphorylated active-site intermediate.</text>
</comment>
<comment type="catalytic activity">
    <reaction evidence="1">
        <text>a 2'-deoxyribonucleoside 5'-diphosphate + ATP = a 2'-deoxyribonucleoside 5'-triphosphate + ADP</text>
        <dbReference type="Rhea" id="RHEA:44640"/>
        <dbReference type="ChEBI" id="CHEBI:30616"/>
        <dbReference type="ChEBI" id="CHEBI:61560"/>
        <dbReference type="ChEBI" id="CHEBI:73316"/>
        <dbReference type="ChEBI" id="CHEBI:456216"/>
        <dbReference type="EC" id="2.7.4.6"/>
    </reaction>
</comment>
<comment type="catalytic activity">
    <reaction evidence="1">
        <text>a ribonucleoside 5'-diphosphate + ATP = a ribonucleoside 5'-triphosphate + ADP</text>
        <dbReference type="Rhea" id="RHEA:18113"/>
        <dbReference type="ChEBI" id="CHEBI:30616"/>
        <dbReference type="ChEBI" id="CHEBI:57930"/>
        <dbReference type="ChEBI" id="CHEBI:61557"/>
        <dbReference type="ChEBI" id="CHEBI:456216"/>
        <dbReference type="EC" id="2.7.4.6"/>
    </reaction>
</comment>
<comment type="cofactor">
    <cofactor evidence="1">
        <name>Mg(2+)</name>
        <dbReference type="ChEBI" id="CHEBI:18420"/>
    </cofactor>
</comment>
<comment type="subunit">
    <text evidence="1">Homotetramer.</text>
</comment>
<comment type="subcellular location">
    <subcellularLocation>
        <location evidence="1">Cytoplasm</location>
    </subcellularLocation>
</comment>
<comment type="similarity">
    <text evidence="1">Belongs to the NDK family.</text>
</comment>
<proteinExistence type="inferred from homology"/>
<dbReference type="EC" id="2.7.4.6" evidence="1"/>
<dbReference type="EMBL" id="CP000872">
    <property type="protein sequence ID" value="ABX61779.1"/>
    <property type="molecule type" value="Genomic_DNA"/>
</dbReference>
<dbReference type="RefSeq" id="WP_002963836.1">
    <property type="nucleotide sequence ID" value="NC_010103.1"/>
</dbReference>
<dbReference type="SMR" id="A9MA67"/>
<dbReference type="GeneID" id="97533983"/>
<dbReference type="KEGG" id="bcs:BCAN_A0706"/>
<dbReference type="HOGENOM" id="CLU_060216_8_1_5"/>
<dbReference type="Proteomes" id="UP000001385">
    <property type="component" value="Chromosome I"/>
</dbReference>
<dbReference type="GO" id="GO:0005737">
    <property type="term" value="C:cytoplasm"/>
    <property type="evidence" value="ECO:0007669"/>
    <property type="project" value="UniProtKB-SubCell"/>
</dbReference>
<dbReference type="GO" id="GO:0005524">
    <property type="term" value="F:ATP binding"/>
    <property type="evidence" value="ECO:0007669"/>
    <property type="project" value="UniProtKB-UniRule"/>
</dbReference>
<dbReference type="GO" id="GO:0046872">
    <property type="term" value="F:metal ion binding"/>
    <property type="evidence" value="ECO:0007669"/>
    <property type="project" value="UniProtKB-KW"/>
</dbReference>
<dbReference type="GO" id="GO:0004550">
    <property type="term" value="F:nucleoside diphosphate kinase activity"/>
    <property type="evidence" value="ECO:0007669"/>
    <property type="project" value="UniProtKB-UniRule"/>
</dbReference>
<dbReference type="GO" id="GO:0006241">
    <property type="term" value="P:CTP biosynthetic process"/>
    <property type="evidence" value="ECO:0007669"/>
    <property type="project" value="UniProtKB-UniRule"/>
</dbReference>
<dbReference type="GO" id="GO:0006183">
    <property type="term" value="P:GTP biosynthetic process"/>
    <property type="evidence" value="ECO:0007669"/>
    <property type="project" value="UniProtKB-UniRule"/>
</dbReference>
<dbReference type="GO" id="GO:0006228">
    <property type="term" value="P:UTP biosynthetic process"/>
    <property type="evidence" value="ECO:0007669"/>
    <property type="project" value="UniProtKB-UniRule"/>
</dbReference>
<dbReference type="CDD" id="cd04413">
    <property type="entry name" value="NDPk_I"/>
    <property type="match status" value="1"/>
</dbReference>
<dbReference type="FunFam" id="3.30.70.141:FF:000001">
    <property type="entry name" value="Nucleoside diphosphate kinase"/>
    <property type="match status" value="1"/>
</dbReference>
<dbReference type="Gene3D" id="3.30.70.141">
    <property type="entry name" value="Nucleoside diphosphate kinase-like domain"/>
    <property type="match status" value="1"/>
</dbReference>
<dbReference type="HAMAP" id="MF_00451">
    <property type="entry name" value="NDP_kinase"/>
    <property type="match status" value="1"/>
</dbReference>
<dbReference type="InterPro" id="IPR034907">
    <property type="entry name" value="NDK-like_dom"/>
</dbReference>
<dbReference type="InterPro" id="IPR036850">
    <property type="entry name" value="NDK-like_dom_sf"/>
</dbReference>
<dbReference type="InterPro" id="IPR001564">
    <property type="entry name" value="Nucleoside_diP_kinase"/>
</dbReference>
<dbReference type="InterPro" id="IPR023005">
    <property type="entry name" value="Nucleoside_diP_kinase_AS"/>
</dbReference>
<dbReference type="NCBIfam" id="NF001908">
    <property type="entry name" value="PRK00668.1"/>
    <property type="match status" value="1"/>
</dbReference>
<dbReference type="PANTHER" id="PTHR11349">
    <property type="entry name" value="NUCLEOSIDE DIPHOSPHATE KINASE"/>
    <property type="match status" value="1"/>
</dbReference>
<dbReference type="Pfam" id="PF00334">
    <property type="entry name" value="NDK"/>
    <property type="match status" value="1"/>
</dbReference>
<dbReference type="PRINTS" id="PR01243">
    <property type="entry name" value="NUCDPKINASE"/>
</dbReference>
<dbReference type="SMART" id="SM00562">
    <property type="entry name" value="NDK"/>
    <property type="match status" value="1"/>
</dbReference>
<dbReference type="SUPFAM" id="SSF54919">
    <property type="entry name" value="Nucleoside diphosphate kinase, NDK"/>
    <property type="match status" value="1"/>
</dbReference>
<dbReference type="PROSITE" id="PS00469">
    <property type="entry name" value="NDPK"/>
    <property type="match status" value="1"/>
</dbReference>
<dbReference type="PROSITE" id="PS51374">
    <property type="entry name" value="NDPK_LIKE"/>
    <property type="match status" value="1"/>
</dbReference>
<keyword id="KW-0067">ATP-binding</keyword>
<keyword id="KW-0963">Cytoplasm</keyword>
<keyword id="KW-0418">Kinase</keyword>
<keyword id="KW-0460">Magnesium</keyword>
<keyword id="KW-0479">Metal-binding</keyword>
<keyword id="KW-0546">Nucleotide metabolism</keyword>
<keyword id="KW-0547">Nucleotide-binding</keyword>
<keyword id="KW-0597">Phosphoprotein</keyword>
<keyword id="KW-1185">Reference proteome</keyword>
<keyword id="KW-0808">Transferase</keyword>
<accession>A9MA67</accession>
<organism>
    <name type="scientific">Brucella canis (strain ATCC 23365 / NCTC 10854 / RM-666)</name>
    <dbReference type="NCBI Taxonomy" id="483179"/>
    <lineage>
        <taxon>Bacteria</taxon>
        <taxon>Pseudomonadati</taxon>
        <taxon>Pseudomonadota</taxon>
        <taxon>Alphaproteobacteria</taxon>
        <taxon>Hyphomicrobiales</taxon>
        <taxon>Brucellaceae</taxon>
        <taxon>Brucella/Ochrobactrum group</taxon>
        <taxon>Brucella</taxon>
    </lineage>
</organism>
<gene>
    <name evidence="1" type="primary">ndk</name>
    <name type="ordered locus">BCAN_A0706</name>
</gene>
<evidence type="ECO:0000255" key="1">
    <source>
        <dbReference type="HAMAP-Rule" id="MF_00451"/>
    </source>
</evidence>
<feature type="chain" id="PRO_1000080954" description="Nucleoside diphosphate kinase">
    <location>
        <begin position="1"/>
        <end position="140"/>
    </location>
</feature>
<feature type="active site" description="Pros-phosphohistidine intermediate" evidence="1">
    <location>
        <position position="117"/>
    </location>
</feature>
<feature type="binding site" evidence="1">
    <location>
        <position position="11"/>
    </location>
    <ligand>
        <name>ATP</name>
        <dbReference type="ChEBI" id="CHEBI:30616"/>
    </ligand>
</feature>
<feature type="binding site" evidence="1">
    <location>
        <position position="59"/>
    </location>
    <ligand>
        <name>ATP</name>
        <dbReference type="ChEBI" id="CHEBI:30616"/>
    </ligand>
</feature>
<feature type="binding site" evidence="1">
    <location>
        <position position="87"/>
    </location>
    <ligand>
        <name>ATP</name>
        <dbReference type="ChEBI" id="CHEBI:30616"/>
    </ligand>
</feature>
<feature type="binding site" evidence="1">
    <location>
        <position position="93"/>
    </location>
    <ligand>
        <name>ATP</name>
        <dbReference type="ChEBI" id="CHEBI:30616"/>
    </ligand>
</feature>
<feature type="binding site" evidence="1">
    <location>
        <position position="104"/>
    </location>
    <ligand>
        <name>ATP</name>
        <dbReference type="ChEBI" id="CHEBI:30616"/>
    </ligand>
</feature>
<feature type="binding site" evidence="1">
    <location>
        <position position="114"/>
    </location>
    <ligand>
        <name>ATP</name>
        <dbReference type="ChEBI" id="CHEBI:30616"/>
    </ligand>
</feature>